<proteinExistence type="inferred from homology"/>
<accession>P59256</accession>
<name>PLSY_THEVB</name>
<reference key="1">
    <citation type="journal article" date="2002" name="DNA Res.">
        <title>Complete genome structure of the thermophilic cyanobacterium Thermosynechococcus elongatus BP-1.</title>
        <authorList>
            <person name="Nakamura Y."/>
            <person name="Kaneko T."/>
            <person name="Sato S."/>
            <person name="Ikeuchi M."/>
            <person name="Katoh H."/>
            <person name="Sasamoto S."/>
            <person name="Watanabe A."/>
            <person name="Iriguchi M."/>
            <person name="Kawashima K."/>
            <person name="Kimura T."/>
            <person name="Kishida Y."/>
            <person name="Kiyokawa C."/>
            <person name="Kohara M."/>
            <person name="Matsumoto M."/>
            <person name="Matsuno A."/>
            <person name="Nakazaki N."/>
            <person name="Shimpo S."/>
            <person name="Sugimoto M."/>
            <person name="Takeuchi C."/>
            <person name="Yamada M."/>
            <person name="Tabata S."/>
        </authorList>
    </citation>
    <scope>NUCLEOTIDE SEQUENCE [LARGE SCALE GENOMIC DNA]</scope>
    <source>
        <strain>NIES-2133 / IAM M-273 / BP-1</strain>
    </source>
</reference>
<protein>
    <recommendedName>
        <fullName evidence="1">Glycerol-3-phosphate acyltransferase</fullName>
    </recommendedName>
    <alternativeName>
        <fullName evidence="1">Acyl-PO4 G3P acyltransferase</fullName>
    </alternativeName>
    <alternativeName>
        <fullName evidence="1">Acyl-phosphate--glycerol-3-phosphate acyltransferase</fullName>
    </alternativeName>
    <alternativeName>
        <fullName evidence="1">G3P acyltransferase</fullName>
        <shortName evidence="1">GPAT</shortName>
        <ecNumber evidence="1">2.3.1.275</ecNumber>
    </alternativeName>
    <alternativeName>
        <fullName evidence="1">Lysophosphatidic acid synthase</fullName>
        <shortName evidence="1">LPA synthase</shortName>
    </alternativeName>
</protein>
<organism>
    <name type="scientific">Thermosynechococcus vestitus (strain NIES-2133 / IAM M-273 / BP-1)</name>
    <dbReference type="NCBI Taxonomy" id="197221"/>
    <lineage>
        <taxon>Bacteria</taxon>
        <taxon>Bacillati</taxon>
        <taxon>Cyanobacteriota</taxon>
        <taxon>Cyanophyceae</taxon>
        <taxon>Acaryochloridales</taxon>
        <taxon>Thermosynechococcaceae</taxon>
        <taxon>Thermosynechococcus</taxon>
    </lineage>
</organism>
<feature type="chain" id="PRO_0000188474" description="Glycerol-3-phosphate acyltransferase">
    <location>
        <begin position="1"/>
        <end position="211"/>
    </location>
</feature>
<feature type="transmembrane region" description="Helical" evidence="1">
    <location>
        <begin position="5"/>
        <end position="25"/>
    </location>
</feature>
<feature type="transmembrane region" description="Helical" evidence="1">
    <location>
        <begin position="55"/>
        <end position="75"/>
    </location>
</feature>
<feature type="transmembrane region" description="Helical" evidence="1">
    <location>
        <begin position="85"/>
        <end position="105"/>
    </location>
</feature>
<feature type="transmembrane region" description="Helical" evidence="1">
    <location>
        <begin position="126"/>
        <end position="146"/>
    </location>
</feature>
<feature type="transmembrane region" description="Helical" evidence="1">
    <location>
        <begin position="168"/>
        <end position="188"/>
    </location>
</feature>
<evidence type="ECO:0000255" key="1">
    <source>
        <dbReference type="HAMAP-Rule" id="MF_01043"/>
    </source>
</evidence>
<gene>
    <name evidence="1" type="primary">plsY</name>
    <name type="ordered locus">tll1107</name>
</gene>
<sequence length="211" mass="22252">MTTAVILGLLALISYLLGSIPTGYLLAKALRGIDIREHGSGSTGATNVLRVVGKGPGLVTFLVDVGKGLGAILVARWVLGQAWSPVPAGWFEFVLLAIAFIAVLAHSKPIWLGWRGGKSVATGLGVLLALNAPTALATFGVFLVVLAVSRIVSLSSMTAAIALPFWFWFFTQSWPFVGFSVIAGAFVIWRHQSNIQRLLAGTEPRLGASQG</sequence>
<dbReference type="EC" id="2.3.1.275" evidence="1"/>
<dbReference type="EMBL" id="BA000039">
    <property type="protein sequence ID" value="BAC08660.1"/>
    <property type="molecule type" value="Genomic_DNA"/>
</dbReference>
<dbReference type="RefSeq" id="NP_681898.1">
    <property type="nucleotide sequence ID" value="NC_004113.1"/>
</dbReference>
<dbReference type="RefSeq" id="WP_011056950.1">
    <property type="nucleotide sequence ID" value="NC_004113.1"/>
</dbReference>
<dbReference type="SMR" id="P59256"/>
<dbReference type="STRING" id="197221.gene:10747703"/>
<dbReference type="EnsemblBacteria" id="BAC08660">
    <property type="protein sequence ID" value="BAC08660"/>
    <property type="gene ID" value="BAC08660"/>
</dbReference>
<dbReference type="KEGG" id="tel:tll1107"/>
<dbReference type="PATRIC" id="fig|197221.4.peg.1161"/>
<dbReference type="eggNOG" id="COG0344">
    <property type="taxonomic scope" value="Bacteria"/>
</dbReference>
<dbReference type="UniPathway" id="UPA00085"/>
<dbReference type="Proteomes" id="UP000000440">
    <property type="component" value="Chromosome"/>
</dbReference>
<dbReference type="GO" id="GO:0005886">
    <property type="term" value="C:plasma membrane"/>
    <property type="evidence" value="ECO:0007669"/>
    <property type="project" value="UniProtKB-SubCell"/>
</dbReference>
<dbReference type="GO" id="GO:0043772">
    <property type="term" value="F:acyl-phosphate glycerol-3-phosphate acyltransferase activity"/>
    <property type="evidence" value="ECO:0007669"/>
    <property type="project" value="UniProtKB-UniRule"/>
</dbReference>
<dbReference type="GO" id="GO:0008654">
    <property type="term" value="P:phospholipid biosynthetic process"/>
    <property type="evidence" value="ECO:0007669"/>
    <property type="project" value="UniProtKB-UniRule"/>
</dbReference>
<dbReference type="HAMAP" id="MF_01043">
    <property type="entry name" value="PlsY"/>
    <property type="match status" value="1"/>
</dbReference>
<dbReference type="InterPro" id="IPR003811">
    <property type="entry name" value="G3P_acylTferase_PlsY"/>
</dbReference>
<dbReference type="NCBIfam" id="TIGR00023">
    <property type="entry name" value="glycerol-3-phosphate 1-O-acyltransferase PlsY"/>
    <property type="match status" value="1"/>
</dbReference>
<dbReference type="PANTHER" id="PTHR30309:SF0">
    <property type="entry name" value="GLYCEROL-3-PHOSPHATE ACYLTRANSFERASE-RELATED"/>
    <property type="match status" value="1"/>
</dbReference>
<dbReference type="PANTHER" id="PTHR30309">
    <property type="entry name" value="INNER MEMBRANE PROTEIN YGIH"/>
    <property type="match status" value="1"/>
</dbReference>
<dbReference type="Pfam" id="PF02660">
    <property type="entry name" value="G3P_acyltransf"/>
    <property type="match status" value="1"/>
</dbReference>
<dbReference type="SMART" id="SM01207">
    <property type="entry name" value="G3P_acyltransf"/>
    <property type="match status" value="1"/>
</dbReference>
<comment type="function">
    <text evidence="1">Catalyzes the transfer of an acyl group from acyl-phosphate (acyl-PO(4)) to glycerol-3-phosphate (G3P) to form lysophosphatidic acid (LPA). This enzyme utilizes acyl-phosphate as fatty acyl donor, but not acyl-CoA or acyl-ACP.</text>
</comment>
<comment type="catalytic activity">
    <reaction evidence="1">
        <text>an acyl phosphate + sn-glycerol 3-phosphate = a 1-acyl-sn-glycero-3-phosphate + phosphate</text>
        <dbReference type="Rhea" id="RHEA:34075"/>
        <dbReference type="ChEBI" id="CHEBI:43474"/>
        <dbReference type="ChEBI" id="CHEBI:57597"/>
        <dbReference type="ChEBI" id="CHEBI:57970"/>
        <dbReference type="ChEBI" id="CHEBI:59918"/>
        <dbReference type="EC" id="2.3.1.275"/>
    </reaction>
</comment>
<comment type="pathway">
    <text evidence="1">Lipid metabolism; phospholipid metabolism.</text>
</comment>
<comment type="subunit">
    <text evidence="1">Probably interacts with PlsX.</text>
</comment>
<comment type="subcellular location">
    <subcellularLocation>
        <location evidence="1">Cell inner membrane</location>
        <topology evidence="1">Multi-pass membrane protein</topology>
    </subcellularLocation>
</comment>
<comment type="similarity">
    <text evidence="1">Belongs to the PlsY family.</text>
</comment>
<keyword id="KW-0997">Cell inner membrane</keyword>
<keyword id="KW-1003">Cell membrane</keyword>
<keyword id="KW-0444">Lipid biosynthesis</keyword>
<keyword id="KW-0443">Lipid metabolism</keyword>
<keyword id="KW-0472">Membrane</keyword>
<keyword id="KW-0594">Phospholipid biosynthesis</keyword>
<keyword id="KW-1208">Phospholipid metabolism</keyword>
<keyword id="KW-1185">Reference proteome</keyword>
<keyword id="KW-0808">Transferase</keyword>
<keyword id="KW-0812">Transmembrane</keyword>
<keyword id="KW-1133">Transmembrane helix</keyword>